<reference key="1">
    <citation type="journal article" date="2001" name="DNA Res.">
        <title>Complete genome sequence of an aerobic thermoacidophilic Crenarchaeon, Sulfolobus tokodaii strain7.</title>
        <authorList>
            <person name="Kawarabayasi Y."/>
            <person name="Hino Y."/>
            <person name="Horikawa H."/>
            <person name="Jin-no K."/>
            <person name="Takahashi M."/>
            <person name="Sekine M."/>
            <person name="Baba S."/>
            <person name="Ankai A."/>
            <person name="Kosugi H."/>
            <person name="Hosoyama A."/>
            <person name="Fukui S."/>
            <person name="Nagai Y."/>
            <person name="Nishijima K."/>
            <person name="Otsuka R."/>
            <person name="Nakazawa H."/>
            <person name="Takamiya M."/>
            <person name="Kato Y."/>
            <person name="Yoshizawa T."/>
            <person name="Tanaka T."/>
            <person name="Kudoh Y."/>
            <person name="Yamazaki J."/>
            <person name="Kushida N."/>
            <person name="Oguchi A."/>
            <person name="Aoki K."/>
            <person name="Masuda S."/>
            <person name="Yanagii M."/>
            <person name="Nishimura M."/>
            <person name="Yamagishi A."/>
            <person name="Oshima T."/>
            <person name="Kikuchi H."/>
        </authorList>
    </citation>
    <scope>NUCLEOTIDE SEQUENCE [LARGE SCALE GENOMIC DNA]</scope>
    <source>
        <strain evidence="5">DSM 16993 / JCM 10545 / NBRC 100140 / 7</strain>
    </source>
</reference>
<reference key="2">
    <citation type="journal article" date="2016" name="Sci. Rep.">
        <title>Crystal structures of archaeal 2-oxoacid:ferredoxin oxidoreductases from Sulfolobus tokodaii.</title>
        <authorList>
            <person name="Yan Z."/>
            <person name="Maruyama A."/>
            <person name="Arakawa T."/>
            <person name="Fushinobu S."/>
            <person name="Wakagi T."/>
        </authorList>
    </citation>
    <scope>X-RAY CRYSTALLOGRAPHY (2.10 ANGSTROMS) IN COMPLEX WITH SUBSTRATE</scope>
    <scope>FUNCTION</scope>
    <scope>CATALYTIC ACTIVITY</scope>
    <scope>BIOPHYSICOCHEMICAL PROPERTIES</scope>
    <scope>SUBUNIT</scope>
    <scope>SUBSTRATE SPECIFICITY</scope>
    <source>
        <strain>DSM 16993 / JCM 10545 / NBRC 100140 / 7</strain>
    </source>
</reference>
<comment type="function">
    <text evidence="2">Catalyzes the coenzyme A-dependent oxidative decarboxylation of different 2-oxoacids such as 2-oxoglutarate, pyruvate and 2-oxobutyrate to form their CoA derivatives.</text>
</comment>
<comment type="catalytic activity">
    <reaction evidence="2">
        <text>a 2-oxocarboxylate + 2 oxidized [2Fe-2S]-[ferredoxin] + CoA = an acyl-CoA + 2 reduced [2Fe-2S]-[ferredoxin] + CO2 + H(+)</text>
        <dbReference type="Rhea" id="RHEA:42316"/>
        <dbReference type="Rhea" id="RHEA-COMP:10000"/>
        <dbReference type="Rhea" id="RHEA-COMP:10001"/>
        <dbReference type="ChEBI" id="CHEBI:15378"/>
        <dbReference type="ChEBI" id="CHEBI:16526"/>
        <dbReference type="ChEBI" id="CHEBI:33737"/>
        <dbReference type="ChEBI" id="CHEBI:33738"/>
        <dbReference type="ChEBI" id="CHEBI:35179"/>
        <dbReference type="ChEBI" id="CHEBI:57287"/>
        <dbReference type="ChEBI" id="CHEBI:58342"/>
        <dbReference type="EC" id="1.2.7.11"/>
    </reaction>
</comment>
<comment type="biophysicochemical properties">
    <kinetics>
        <KM evidence="2">1.6 mM for pyruvate</KM>
        <KM evidence="2">15 mM for 2-oxoglutarate</KM>
        <Vmax evidence="2">7.0 umol/min/mg enzyme with pyruvate as substrate</Vmax>
        <Vmax evidence="2">1.4 umol/min/mg enzyme with 2-oxoglutarate as substrate</Vmax>
    </kinetics>
</comment>
<comment type="subunit">
    <text evidence="2">Heterodimer composed of an alpha and a beta subunit.</text>
</comment>
<comment type="domain">
    <text evidence="1">The Tyr-Pro-Ile-Thr-Pro (YPITP) motif is important for the turnover of the reaction, presumably through its flexibility and mobility.</text>
</comment>
<sequence>MTRIVWMIGGAQGLGVDTSANIFGNAVAKAGYYLFGNREYYSNIKGRHSYFEVVISEKPIRSLSSYVNILASFDAETVFQHFTETKEYLIYNVEYENTTVDLVKSMEPEMAEQVKEALSKERLGFTIKDVLEYLKRRGVKVIGFNYTELIKKIADTFKVPMSVVERAKNMIAVGASYGLLGLKFDYLKDAISSTFKNELFIKFNTMAAELGYNSVPNVYKLQEYKIEKQRIQVDGNTISAMGKLAGGLRFQSYYPITPASDESVYIEANQNLDMIVEGNELRKGGVVVVQAEDELAAINMAVGAALTGVRSATATSGPGFSLMSEGISWAGMNEVPVVITYYMRGAPATGLPTRSGQADLKFALNVGHGEFPRIVIASGDHVEIFWDAIWALNLAEKYQTPVIHIIEKTLANAYSVFEEELITNRPYVIERGKIVKPTSDYFNRFEVTEDGISPRVFLGQASIFYTGDEHNEEGHITENSINRMKMYEKRNKKLETADKEIPEEQRVNIVGDADIVLLTWGSPKGAILDAMEELSKDGIKTMMVQVKMFNPYPKNLMKKILSGKSKIIAVENNYNAQGAEVLAEKTGIFATNYILKWTGRPITREEVIEGIKKILERDEKRVVLYGGA</sequence>
<evidence type="ECO:0000250" key="1">
    <source>
        <dbReference type="UniProtKB" id="P72578"/>
    </source>
</evidence>
<evidence type="ECO:0000269" key="2">
    <source>
    </source>
</evidence>
<evidence type="ECO:0000303" key="3">
    <source>
    </source>
</evidence>
<evidence type="ECO:0000312" key="4">
    <source>
        <dbReference type="EMBL" id="BAB67545.1"/>
    </source>
</evidence>
<evidence type="ECO:0000312" key="5">
    <source>
        <dbReference type="Proteomes" id="UP000001015"/>
    </source>
</evidence>
<evidence type="ECO:0007744" key="6">
    <source>
        <dbReference type="PDB" id="5B47"/>
    </source>
</evidence>
<evidence type="ECO:0007829" key="7">
    <source>
        <dbReference type="PDB" id="5B46"/>
    </source>
</evidence>
<name>OFOA2_SULTO</name>
<proteinExistence type="evidence at protein level"/>
<feature type="chain" id="PRO_0000445533" description="2-oxoacid:ferredoxin oxidoreductase 2, subunit alpha">
    <location>
        <begin position="1"/>
        <end position="628"/>
    </location>
</feature>
<feature type="short sequence motif" description="YPITP motif" evidence="1">
    <location>
        <begin position="254"/>
        <end position="258"/>
    </location>
</feature>
<feature type="binding site" evidence="2 6">
    <location>
        <position position="257"/>
    </location>
    <ligand>
        <name>substrate</name>
    </ligand>
</feature>
<feature type="binding site" evidence="2 6">
    <location>
        <position position="344"/>
    </location>
    <ligand>
        <name>substrate</name>
    </ligand>
</feature>
<feature type="strand" evidence="7">
    <location>
        <begin position="4"/>
        <end position="11"/>
    </location>
</feature>
<feature type="helix" evidence="7">
    <location>
        <begin position="16"/>
        <end position="29"/>
    </location>
</feature>
<feature type="strand" evidence="7">
    <location>
        <begin position="33"/>
        <end position="36"/>
    </location>
</feature>
<feature type="strand" evidence="7">
    <location>
        <begin position="44"/>
        <end position="58"/>
    </location>
</feature>
<feature type="strand" evidence="7">
    <location>
        <begin position="65"/>
        <end position="71"/>
    </location>
</feature>
<feature type="helix" evidence="7">
    <location>
        <begin position="75"/>
        <end position="81"/>
    </location>
</feature>
<feature type="helix" evidence="7">
    <location>
        <begin position="82"/>
        <end position="84"/>
    </location>
</feature>
<feature type="strand" evidence="7">
    <location>
        <begin position="85"/>
        <end position="92"/>
    </location>
</feature>
<feature type="helix" evidence="7">
    <location>
        <begin position="93"/>
        <end position="95"/>
    </location>
</feature>
<feature type="helix" evidence="7">
    <location>
        <begin position="100"/>
        <end position="102"/>
    </location>
</feature>
<feature type="helix" evidence="7">
    <location>
        <begin position="108"/>
        <end position="119"/>
    </location>
</feature>
<feature type="turn" evidence="7">
    <location>
        <begin position="120"/>
        <end position="122"/>
    </location>
</feature>
<feature type="helix" evidence="7">
    <location>
        <begin position="127"/>
        <end position="135"/>
    </location>
</feature>
<feature type="turn" evidence="7">
    <location>
        <begin position="136"/>
        <end position="138"/>
    </location>
</feature>
<feature type="strand" evidence="7">
    <location>
        <begin position="140"/>
        <end position="144"/>
    </location>
</feature>
<feature type="helix" evidence="7">
    <location>
        <begin position="146"/>
        <end position="157"/>
    </location>
</feature>
<feature type="helix" evidence="7">
    <location>
        <begin position="161"/>
        <end position="164"/>
    </location>
</feature>
<feature type="helix" evidence="7">
    <location>
        <begin position="167"/>
        <end position="180"/>
    </location>
</feature>
<feature type="helix" evidence="7">
    <location>
        <begin position="184"/>
        <end position="192"/>
    </location>
</feature>
<feature type="helix" evidence="7">
    <location>
        <begin position="198"/>
        <end position="213"/>
    </location>
</feature>
<feature type="strand" evidence="7">
    <location>
        <begin position="230"/>
        <end position="234"/>
    </location>
</feature>
<feature type="helix" evidence="7">
    <location>
        <begin position="235"/>
        <end position="245"/>
    </location>
</feature>
<feature type="strand" evidence="7">
    <location>
        <begin position="248"/>
        <end position="253"/>
    </location>
</feature>
<feature type="turn" evidence="7">
    <location>
        <begin position="257"/>
        <end position="259"/>
    </location>
</feature>
<feature type="helix" evidence="7">
    <location>
        <begin position="260"/>
        <end position="268"/>
    </location>
</feature>
<feature type="strand" evidence="7">
    <location>
        <begin position="271"/>
        <end position="276"/>
    </location>
</feature>
<feature type="turn" evidence="7">
    <location>
        <begin position="277"/>
        <end position="279"/>
    </location>
</feature>
<feature type="strand" evidence="7">
    <location>
        <begin position="280"/>
        <end position="285"/>
    </location>
</feature>
<feature type="strand" evidence="7">
    <location>
        <begin position="287"/>
        <end position="290"/>
    </location>
</feature>
<feature type="helix" evidence="7">
    <location>
        <begin position="294"/>
        <end position="305"/>
    </location>
</feature>
<feature type="turn" evidence="7">
    <location>
        <begin position="306"/>
        <end position="308"/>
    </location>
</feature>
<feature type="strand" evidence="7">
    <location>
        <begin position="310"/>
        <end position="315"/>
    </location>
</feature>
<feature type="helix" evidence="7">
    <location>
        <begin position="317"/>
        <end position="332"/>
    </location>
</feature>
<feature type="strand" evidence="7">
    <location>
        <begin position="337"/>
        <end position="341"/>
    </location>
</feature>
<feature type="strand" evidence="7">
    <location>
        <begin position="347"/>
        <end position="349"/>
    </location>
</feature>
<feature type="strand" evidence="7">
    <location>
        <begin position="351"/>
        <end position="355"/>
    </location>
</feature>
<feature type="helix" evidence="7">
    <location>
        <begin position="360"/>
        <end position="364"/>
    </location>
</feature>
<feature type="strand" evidence="7">
    <location>
        <begin position="367"/>
        <end position="369"/>
    </location>
</feature>
<feature type="strand" evidence="7">
    <location>
        <begin position="374"/>
        <end position="377"/>
    </location>
</feature>
<feature type="helix" evidence="7">
    <location>
        <begin position="381"/>
        <end position="398"/>
    </location>
</feature>
<feature type="strand" evidence="7">
    <location>
        <begin position="400"/>
        <end position="405"/>
    </location>
</feature>
<feature type="helix" evidence="7">
    <location>
        <begin position="408"/>
        <end position="412"/>
    </location>
</feature>
<feature type="strand" evidence="7">
    <location>
        <begin position="414"/>
        <end position="418"/>
    </location>
</feature>
<feature type="helix" evidence="7">
    <location>
        <begin position="419"/>
        <end position="422"/>
    </location>
</feature>
<feature type="strand" evidence="7">
    <location>
        <begin position="438"/>
        <end position="441"/>
    </location>
</feature>
<feature type="strand" evidence="7">
    <location>
        <begin position="460"/>
        <end position="462"/>
    </location>
</feature>
<feature type="helix" evidence="7">
    <location>
        <begin position="480"/>
        <end position="500"/>
    </location>
</feature>
<feature type="helix" evidence="7">
    <location>
        <begin position="503"/>
        <end position="506"/>
    </location>
</feature>
<feature type="strand" evidence="7">
    <location>
        <begin position="507"/>
        <end position="510"/>
    </location>
</feature>
<feature type="strand" evidence="7">
    <location>
        <begin position="514"/>
        <end position="521"/>
    </location>
</feature>
<feature type="helix" evidence="7">
    <location>
        <begin position="524"/>
        <end position="535"/>
    </location>
</feature>
<feature type="turn" evidence="7">
    <location>
        <begin position="536"/>
        <end position="538"/>
    </location>
</feature>
<feature type="strand" evidence="7">
    <location>
        <begin position="541"/>
        <end position="546"/>
    </location>
</feature>
<feature type="strand" evidence="7">
    <location>
        <begin position="548"/>
        <end position="551"/>
    </location>
</feature>
<feature type="helix" evidence="7">
    <location>
        <begin position="554"/>
        <end position="561"/>
    </location>
</feature>
<feature type="strand" evidence="7">
    <location>
        <begin position="565"/>
        <end position="575"/>
    </location>
</feature>
<feature type="helix" evidence="7">
    <location>
        <begin position="577"/>
        <end position="586"/>
    </location>
</feature>
<feature type="strand" evidence="7">
    <location>
        <begin position="591"/>
        <end position="596"/>
    </location>
</feature>
<feature type="strand" evidence="7">
    <location>
        <begin position="598"/>
        <end position="600"/>
    </location>
</feature>
<feature type="helix" evidence="7">
    <location>
        <begin position="604"/>
        <end position="617"/>
    </location>
</feature>
<feature type="strand" evidence="7">
    <location>
        <begin position="620"/>
        <end position="624"/>
    </location>
</feature>
<keyword id="KW-0002">3D-structure</keyword>
<keyword id="KW-0560">Oxidoreductase</keyword>
<keyword id="KW-0670">Pyruvate</keyword>
<keyword id="KW-1185">Reference proteome</keyword>
<accession>Q96XT2</accession>
<gene>
    <name evidence="4" type="primary">ST2435</name>
    <name evidence="4" type="ordered locus">STK_24350</name>
</gene>
<organism>
    <name type="scientific">Sulfurisphaera tokodaii (strain DSM 16993 / JCM 10545 / NBRC 100140 / 7)</name>
    <name type="common">Sulfolobus tokodaii</name>
    <dbReference type="NCBI Taxonomy" id="273063"/>
    <lineage>
        <taxon>Archaea</taxon>
        <taxon>Thermoproteota</taxon>
        <taxon>Thermoprotei</taxon>
        <taxon>Sulfolobales</taxon>
        <taxon>Sulfolobaceae</taxon>
        <taxon>Sulfurisphaera</taxon>
    </lineage>
</organism>
<protein>
    <recommendedName>
        <fullName evidence="3">2-oxoacid:ferredoxin oxidoreductase 2, subunit alpha</fullName>
        <shortName evidence="3">OFOR2</shortName>
        <ecNumber evidence="2">1.2.7.11</ecNumber>
    </recommendedName>
</protein>
<dbReference type="EC" id="1.2.7.11" evidence="2"/>
<dbReference type="EMBL" id="BA000023">
    <property type="protein sequence ID" value="BAB67545.1"/>
    <property type="molecule type" value="Genomic_DNA"/>
</dbReference>
<dbReference type="PDB" id="5B46">
    <property type="method" value="X-ray"/>
    <property type="resolution" value="2.10 A"/>
    <property type="chains" value="A=1-628"/>
</dbReference>
<dbReference type="PDB" id="5B47">
    <property type="method" value="X-ray"/>
    <property type="resolution" value="2.20 A"/>
    <property type="chains" value="A=1-628"/>
</dbReference>
<dbReference type="PDBsum" id="5B46"/>
<dbReference type="PDBsum" id="5B47"/>
<dbReference type="SMR" id="Q96XT2"/>
<dbReference type="STRING" id="273063.STK_24350"/>
<dbReference type="KEGG" id="sto:STK_24350"/>
<dbReference type="PATRIC" id="fig|273063.9.peg.2752"/>
<dbReference type="eggNOG" id="arCOG01606">
    <property type="taxonomic scope" value="Archaea"/>
</dbReference>
<dbReference type="BRENDA" id="1.2.7.11">
    <property type="organism ID" value="15396"/>
</dbReference>
<dbReference type="Proteomes" id="UP000001015">
    <property type="component" value="Chromosome"/>
</dbReference>
<dbReference type="GO" id="GO:0018491">
    <property type="term" value="F:2-oxobutyrate synthase activity"/>
    <property type="evidence" value="ECO:0000314"/>
    <property type="project" value="UniProtKB"/>
</dbReference>
<dbReference type="GO" id="GO:0047553">
    <property type="term" value="F:2-oxoglutarate synthase activity"/>
    <property type="evidence" value="ECO:0000314"/>
    <property type="project" value="UniProtKB"/>
</dbReference>
<dbReference type="GO" id="GO:0019164">
    <property type="term" value="F:pyruvate synthase activity"/>
    <property type="evidence" value="ECO:0000314"/>
    <property type="project" value="UniProtKB"/>
</dbReference>
<dbReference type="GO" id="GO:0006979">
    <property type="term" value="P:response to oxidative stress"/>
    <property type="evidence" value="ECO:0007669"/>
    <property type="project" value="TreeGrafter"/>
</dbReference>
<dbReference type="CDD" id="cd07034">
    <property type="entry name" value="TPP_PYR_PFOR_IOR-alpha_like"/>
    <property type="match status" value="1"/>
</dbReference>
<dbReference type="FunFam" id="3.40.50.970:FF:000022">
    <property type="entry name" value="2-oxoglutarate ferredoxin oxidoreductase alpha subunit"/>
    <property type="match status" value="1"/>
</dbReference>
<dbReference type="FunFam" id="3.40.50.920:FF:000009">
    <property type="entry name" value="2-oxoglutarate ferredoxin oxidoreductase subunit alpha"/>
    <property type="match status" value="1"/>
</dbReference>
<dbReference type="Gene3D" id="3.40.50.920">
    <property type="match status" value="1"/>
</dbReference>
<dbReference type="Gene3D" id="3.40.50.970">
    <property type="match status" value="1"/>
</dbReference>
<dbReference type="Gene3D" id="3.40.920.10">
    <property type="entry name" value="Pyruvate-ferredoxin oxidoreductase, PFOR, domain III"/>
    <property type="match status" value="1"/>
</dbReference>
<dbReference type="InterPro" id="IPR022367">
    <property type="entry name" value="2-oxoacid/accept_OxRdtase_asu"/>
</dbReference>
<dbReference type="InterPro" id="IPR053400">
    <property type="entry name" value="2-oxoacid_Fdx_oxidoreductase"/>
</dbReference>
<dbReference type="InterPro" id="IPR033412">
    <property type="entry name" value="PFOR_II"/>
</dbReference>
<dbReference type="InterPro" id="IPR050722">
    <property type="entry name" value="Pyruvate:ferred/Flavod_OxRd"/>
</dbReference>
<dbReference type="InterPro" id="IPR019752">
    <property type="entry name" value="Pyrv/ketoisovalerate_OxRed_cat"/>
</dbReference>
<dbReference type="InterPro" id="IPR002880">
    <property type="entry name" value="Pyrv_Fd/Flavodoxin_OxRdtase_N"/>
</dbReference>
<dbReference type="InterPro" id="IPR002869">
    <property type="entry name" value="Pyrv_flavodox_OxRed_cen"/>
</dbReference>
<dbReference type="InterPro" id="IPR029061">
    <property type="entry name" value="THDP-binding"/>
</dbReference>
<dbReference type="InterPro" id="IPR009014">
    <property type="entry name" value="Transketo_C/PFOR_II"/>
</dbReference>
<dbReference type="NCBIfam" id="TIGR03710">
    <property type="entry name" value="OAFO_sf"/>
    <property type="match status" value="1"/>
</dbReference>
<dbReference type="NCBIfam" id="NF041170">
    <property type="entry name" value="Oxoac_fdxalpha_Archa"/>
    <property type="match status" value="1"/>
</dbReference>
<dbReference type="PANTHER" id="PTHR32154:SF16">
    <property type="entry name" value="PYRUVATE FLAVODOXIN_FERREDOXIN OXIDOREDUCTASE DOMAIN PROTEIN"/>
    <property type="match status" value="1"/>
</dbReference>
<dbReference type="PANTHER" id="PTHR32154">
    <property type="entry name" value="PYRUVATE-FLAVODOXIN OXIDOREDUCTASE-RELATED"/>
    <property type="match status" value="1"/>
</dbReference>
<dbReference type="Pfam" id="PF17147">
    <property type="entry name" value="PFOR_II"/>
    <property type="match status" value="1"/>
</dbReference>
<dbReference type="Pfam" id="PF01558">
    <property type="entry name" value="POR"/>
    <property type="match status" value="1"/>
</dbReference>
<dbReference type="Pfam" id="PF01855">
    <property type="entry name" value="POR_N"/>
    <property type="match status" value="1"/>
</dbReference>
<dbReference type="SUPFAM" id="SSF53323">
    <property type="entry name" value="Pyruvate-ferredoxin oxidoreductase, PFOR, domain III"/>
    <property type="match status" value="1"/>
</dbReference>
<dbReference type="SUPFAM" id="SSF52518">
    <property type="entry name" value="Thiamin diphosphate-binding fold (THDP-binding)"/>
    <property type="match status" value="1"/>
</dbReference>
<dbReference type="SUPFAM" id="SSF52922">
    <property type="entry name" value="TK C-terminal domain-like"/>
    <property type="match status" value="1"/>
</dbReference>